<proteinExistence type="inferred from homology"/>
<keyword id="KW-1015">Disulfide bond</keyword>
<keyword id="KW-1185">Reference proteome</keyword>
<keyword id="KW-0732">Signal</keyword>
<evidence type="ECO:0000250" key="1"/>
<evidence type="ECO:0000250" key="2">
    <source>
        <dbReference type="UniProtKB" id="P20933"/>
    </source>
</evidence>
<evidence type="ECO:0000255" key="3"/>
<evidence type="ECO:0000312" key="4">
    <source>
        <dbReference type="EMBL" id="EDW35913.1"/>
    </source>
</evidence>
<reference evidence="4" key="1">
    <citation type="journal article" date="2007" name="Nature">
        <title>Evolution of genes and genomes on the Drosophila phylogeny.</title>
        <authorList>
            <consortium name="Drosophila 12 genomes consortium"/>
        </authorList>
    </citation>
    <scope>NUCLEOTIDE SEQUENCE [LARGE SCALE GENOMIC DNA]</scope>
    <source>
        <strain>MSH-3 / Tucson 14011-0111.49</strain>
    </source>
</reference>
<sequence>MRYLCRAQLLSLLLLPLLKARLSVPAHPIPQSFLPLMISTWNYTDANREAWTVLRQGPRRTRQAVIQGCLHCQNSNSCGRLLGGHSAPDSSGGITLEAALIDGANMDYGAVAGMAGIRNAIGVAHDVLRYTNHSLLVGEAAARFAEAMGHKKEVHSLSTTLDVLLPWLLGKCQPNFWRNVRPLANDSCGTFSPLPQEQQQREMRQEYPIEPGHHDQVGFLALDTEGHLHAASLSSGARFRIPGRVGDAAVPGAGIYADNQVGGALATGDGDVLMRFLPALLAVEALRAGQSPASAAEAVMRRLLRHHTEFNGGLVVVSRLGVYSAACAGLDEFQFVVSGESSGRSMRRVEGIKCLDRHEVVTGGPRGNFYVVSKKIWAAGGEDVLVQRVEKITLNEGVDSREFEEEYLEDKDAEIDVDEGEKAEEVRSLLDESPGDLLLHQLGLAPPFPFRFPFIYF</sequence>
<organism>
    <name type="scientific">Drosophila persimilis</name>
    <name type="common">Fruit fly</name>
    <dbReference type="NCBI Taxonomy" id="7234"/>
    <lineage>
        <taxon>Eukaryota</taxon>
        <taxon>Metazoa</taxon>
        <taxon>Ecdysozoa</taxon>
        <taxon>Arthropoda</taxon>
        <taxon>Hexapoda</taxon>
        <taxon>Insecta</taxon>
        <taxon>Pterygota</taxon>
        <taxon>Neoptera</taxon>
        <taxon>Endopterygota</taxon>
        <taxon>Diptera</taxon>
        <taxon>Brachycera</taxon>
        <taxon>Muscomorpha</taxon>
        <taxon>Ephydroidea</taxon>
        <taxon>Drosophilidae</taxon>
        <taxon>Drosophila</taxon>
        <taxon>Sophophora</taxon>
    </lineage>
</organism>
<gene>
    <name type="ORF">GL17509</name>
</gene>
<feature type="signal peptide" evidence="3">
    <location>
        <begin position="1"/>
        <end position="20"/>
    </location>
</feature>
<feature type="chain" id="PRO_0000384144" description="L-asparaginase-like protein GL17509">
    <location>
        <begin position="21"/>
        <end position="457"/>
    </location>
</feature>
<feature type="disulfide bond" evidence="2">
    <location>
        <begin position="72"/>
        <end position="78"/>
    </location>
</feature>
<feature type="disulfide bond" evidence="2">
    <location>
        <begin position="172"/>
        <end position="188"/>
    </location>
</feature>
<feature type="disulfide bond" evidence="1">
    <location>
        <begin position="327"/>
        <end position="354"/>
    </location>
</feature>
<accession>B4GHE3</accession>
<protein>
    <recommendedName>
        <fullName>L-asparaginase-like protein GL17509</fullName>
    </recommendedName>
</protein>
<name>ASPG2_DROPE</name>
<comment type="similarity">
    <text evidence="3">Belongs to the Ntn-hydrolase family.</text>
</comment>
<dbReference type="EMBL" id="CH479183">
    <property type="protein sequence ID" value="EDW35913.1"/>
    <property type="molecule type" value="Genomic_DNA"/>
</dbReference>
<dbReference type="RefSeq" id="XP_002018074.1">
    <property type="nucleotide sequence ID" value="XM_002018038.1"/>
</dbReference>
<dbReference type="SMR" id="B4GHE3"/>
<dbReference type="STRING" id="7234.B4GHE3"/>
<dbReference type="MEROPS" id="T02.A04"/>
<dbReference type="EnsemblMetazoa" id="FBtr0183124">
    <property type="protein sequence ID" value="FBpp0181616"/>
    <property type="gene ID" value="FBgn0155112"/>
</dbReference>
<dbReference type="EnsemblMetazoa" id="XM_002018038.2">
    <property type="protein sequence ID" value="XP_002018074.2"/>
    <property type="gene ID" value="LOC6592594"/>
</dbReference>
<dbReference type="GeneID" id="6592594"/>
<dbReference type="KEGG" id="dpe:6592594"/>
<dbReference type="eggNOG" id="KOG1593">
    <property type="taxonomic scope" value="Eukaryota"/>
</dbReference>
<dbReference type="HOGENOM" id="CLU_021603_0_0_1"/>
<dbReference type="OMA" id="QAVIQGC"/>
<dbReference type="OrthoDB" id="188713at2759"/>
<dbReference type="PhylomeDB" id="B4GHE3"/>
<dbReference type="Proteomes" id="UP000008744">
    <property type="component" value="Unassembled WGS sequence"/>
</dbReference>
<dbReference type="GO" id="GO:0005764">
    <property type="term" value="C:lysosome"/>
    <property type="evidence" value="ECO:0007669"/>
    <property type="project" value="TreeGrafter"/>
</dbReference>
<dbReference type="GO" id="GO:0003948">
    <property type="term" value="F:N4-(beta-N-acetylglucosaminyl)-L-asparaginase activity"/>
    <property type="evidence" value="ECO:0007669"/>
    <property type="project" value="TreeGrafter"/>
</dbReference>
<dbReference type="CDD" id="cd04513">
    <property type="entry name" value="Glycosylasparaginase"/>
    <property type="match status" value="1"/>
</dbReference>
<dbReference type="Gene3D" id="3.60.20.30">
    <property type="entry name" value="(Glycosyl)asparaginase"/>
    <property type="match status" value="1"/>
</dbReference>
<dbReference type="InterPro" id="IPR029055">
    <property type="entry name" value="Ntn_hydrolases_N"/>
</dbReference>
<dbReference type="InterPro" id="IPR000246">
    <property type="entry name" value="Peptidase_T2"/>
</dbReference>
<dbReference type="PANTHER" id="PTHR10188">
    <property type="entry name" value="L-ASPARAGINASE"/>
    <property type="match status" value="1"/>
</dbReference>
<dbReference type="PANTHER" id="PTHR10188:SF6">
    <property type="entry name" value="N(4)-(BETA-N-ACETYLGLUCOSAMINYL)-L-ASPARAGINASE"/>
    <property type="match status" value="1"/>
</dbReference>
<dbReference type="Pfam" id="PF01112">
    <property type="entry name" value="Asparaginase_2"/>
    <property type="match status" value="1"/>
</dbReference>
<dbReference type="SUPFAM" id="SSF56235">
    <property type="entry name" value="N-terminal nucleophile aminohydrolases (Ntn hydrolases)"/>
    <property type="match status" value="1"/>
</dbReference>